<comment type="function">
    <text evidence="1">May act as a calcium-independent, swelling-dependent volume-regulated anion channel (VRAC-swell) which plays a pivotal role in the process of regulatory volume decrease (RVD) in the brain through the efflux of anions like chloride and organic osmolytes like glutamate.</text>
</comment>
<comment type="catalytic activity">
    <reaction evidence="1">
        <text>chloride(in) = chloride(out)</text>
        <dbReference type="Rhea" id="RHEA:29823"/>
        <dbReference type="ChEBI" id="CHEBI:17996"/>
    </reaction>
</comment>
<comment type="catalytic activity">
    <reaction evidence="1">
        <text>L-glutamate(out) = L-glutamate(in)</text>
        <dbReference type="Rhea" id="RHEA:66336"/>
        <dbReference type="ChEBI" id="CHEBI:29985"/>
    </reaction>
    <physiologicalReaction direction="right-to-left" evidence="1">
        <dbReference type="Rhea" id="RHEA:66338"/>
    </physiologicalReaction>
</comment>
<comment type="subunit">
    <text evidence="1 2">Homotetramer; disulfide-linked. Homodimer.</text>
</comment>
<comment type="subcellular location">
    <subcellularLocation>
        <location evidence="1">Cell membrane</location>
        <topology evidence="3">Multi-pass membrane protein</topology>
    </subcellularLocation>
</comment>
<comment type="similarity">
    <text evidence="4">Belongs to the tweety family.</text>
</comment>
<protein>
    <recommendedName>
        <fullName>Protein tweety homolog 1-A</fullName>
    </recommendedName>
    <alternativeName>
        <fullName evidence="1">Volume-regulated anion channel subunit ttyh1-a</fullName>
    </alternativeName>
</protein>
<accession>Q6AX57</accession>
<organism>
    <name type="scientific">Xenopus laevis</name>
    <name type="common">African clawed frog</name>
    <dbReference type="NCBI Taxonomy" id="8355"/>
    <lineage>
        <taxon>Eukaryota</taxon>
        <taxon>Metazoa</taxon>
        <taxon>Chordata</taxon>
        <taxon>Craniata</taxon>
        <taxon>Vertebrata</taxon>
        <taxon>Euteleostomi</taxon>
        <taxon>Amphibia</taxon>
        <taxon>Batrachia</taxon>
        <taxon>Anura</taxon>
        <taxon>Pipoidea</taxon>
        <taxon>Pipidae</taxon>
        <taxon>Xenopodinae</taxon>
        <taxon>Xenopus</taxon>
        <taxon>Xenopus</taxon>
    </lineage>
</organism>
<reference key="1">
    <citation type="submission" date="2004-08" db="EMBL/GenBank/DDBJ databases">
        <authorList>
            <consortium name="NIH - Xenopus Gene Collection (XGC) project"/>
        </authorList>
    </citation>
    <scope>NUCLEOTIDE SEQUENCE [LARGE SCALE MRNA]</scope>
    <source>
        <tissue>Eye</tissue>
    </source>
</reference>
<gene>
    <name type="primary">ttyh1-a</name>
</gene>
<sequence length="449" mass="50941">MSTSHGYRASWWTNILHQVPHTNFQFEVVDNQFAPQEWPYQQALLFLASIAGLCLAISLILICVYLIRFCCCASQEDDDSKNHRVCCVTWSCVAAVIICCAGIGIGFYGNSETNDGVYQVTYSLMNTNHTLTSINLLVSDTVELLSSVVKSDLTQLEEIFSKRTEFLVMIRNTRRQVESVAQQLAEISFWKGTELNPNVLAEQVNFIEDYRWLAYILLLLLDLIICLFTLLGLAKRIKWLVIVMTVVSFFVLLLSWGSMGLEMATAVGLSDFCSNPDGYVMNQTQMITNINPDILQYYISCNQDVANPFRQRLTTSQRALSNIHSQLHGLEREAVPQFPTAEKNLLAVQGMLNTTEGNFHHLVALLNCRGLHKDYVDALKGLCYDGMEGILFLLLFSFLSALSFTAAVCSLPRAWKRFQNRDLDYDDMDEDDPFNPQESKRFVQWQSSI</sequence>
<proteinExistence type="evidence at transcript level"/>
<name>TTY1A_XENLA</name>
<keyword id="KW-1003">Cell membrane</keyword>
<keyword id="KW-0868">Chloride</keyword>
<keyword id="KW-0869">Chloride channel</keyword>
<keyword id="KW-1015">Disulfide bond</keyword>
<keyword id="KW-0325">Glycoprotein</keyword>
<keyword id="KW-0407">Ion channel</keyword>
<keyword id="KW-0406">Ion transport</keyword>
<keyword id="KW-0472">Membrane</keyword>
<keyword id="KW-1185">Reference proteome</keyword>
<keyword id="KW-0812">Transmembrane</keyword>
<keyword id="KW-1133">Transmembrane helix</keyword>
<keyword id="KW-0813">Transport</keyword>
<dbReference type="EMBL" id="BC079745">
    <property type="protein sequence ID" value="AAH79745.1"/>
    <property type="molecule type" value="mRNA"/>
</dbReference>
<dbReference type="RefSeq" id="NP_001087415.1">
    <property type="nucleotide sequence ID" value="NM_001093946.1"/>
</dbReference>
<dbReference type="SMR" id="Q6AX57"/>
<dbReference type="GlyCosmos" id="Q6AX57">
    <property type="glycosylation" value="3 sites, No reported glycans"/>
</dbReference>
<dbReference type="DNASU" id="447239"/>
<dbReference type="GeneID" id="447239"/>
<dbReference type="KEGG" id="xla:447239"/>
<dbReference type="AGR" id="Xenbase:XB-GENE-940455"/>
<dbReference type="CTD" id="447239"/>
<dbReference type="Xenbase" id="XB-GENE-940455">
    <property type="gene designation" value="ttyh1.L"/>
</dbReference>
<dbReference type="OMA" id="ASYIEYY"/>
<dbReference type="OrthoDB" id="187568at2759"/>
<dbReference type="Proteomes" id="UP000186698">
    <property type="component" value="Chromosome 7L"/>
</dbReference>
<dbReference type="Bgee" id="447239">
    <property type="expression patterns" value="Expressed in brain and 11 other cell types or tissues"/>
</dbReference>
<dbReference type="GO" id="GO:0034707">
    <property type="term" value="C:chloride channel complex"/>
    <property type="evidence" value="ECO:0007669"/>
    <property type="project" value="UniProtKB-KW"/>
</dbReference>
<dbReference type="GO" id="GO:0005886">
    <property type="term" value="C:plasma membrane"/>
    <property type="evidence" value="ECO:0000250"/>
    <property type="project" value="UniProtKB"/>
</dbReference>
<dbReference type="GO" id="GO:0030868">
    <property type="term" value="C:smooth endoplasmic reticulum membrane"/>
    <property type="evidence" value="ECO:0000318"/>
    <property type="project" value="GO_Central"/>
</dbReference>
<dbReference type="GO" id="GO:0005229">
    <property type="term" value="F:intracellularly calcium-gated chloride channel activity"/>
    <property type="evidence" value="ECO:0000318"/>
    <property type="project" value="GO_Central"/>
</dbReference>
<dbReference type="GO" id="GO:0072320">
    <property type="term" value="F:volume-sensitive chloride channel activity"/>
    <property type="evidence" value="ECO:0000250"/>
    <property type="project" value="UniProtKB"/>
</dbReference>
<dbReference type="GO" id="GO:0015813">
    <property type="term" value="P:L-glutamate transmembrane transport"/>
    <property type="evidence" value="ECO:0000250"/>
    <property type="project" value="UniProtKB"/>
</dbReference>
<dbReference type="CDD" id="cd07912">
    <property type="entry name" value="Tweety_N"/>
    <property type="match status" value="1"/>
</dbReference>
<dbReference type="InterPro" id="IPR006990">
    <property type="entry name" value="Tweety"/>
</dbReference>
<dbReference type="PANTHER" id="PTHR12424:SF5">
    <property type="entry name" value="PROTEIN TWEETY HOMOLOG 1"/>
    <property type="match status" value="1"/>
</dbReference>
<dbReference type="PANTHER" id="PTHR12424">
    <property type="entry name" value="TWEETY-RELATED"/>
    <property type="match status" value="1"/>
</dbReference>
<dbReference type="Pfam" id="PF04906">
    <property type="entry name" value="Tweety"/>
    <property type="match status" value="1"/>
</dbReference>
<evidence type="ECO:0000250" key="1">
    <source>
        <dbReference type="UniProtKB" id="Q9D3A9"/>
    </source>
</evidence>
<evidence type="ECO:0000250" key="2">
    <source>
        <dbReference type="UniProtKB" id="Q9H313"/>
    </source>
</evidence>
<evidence type="ECO:0000255" key="3"/>
<evidence type="ECO:0000305" key="4"/>
<feature type="chain" id="PRO_0000312243" description="Protein tweety homolog 1-A">
    <location>
        <begin position="1"/>
        <end position="449"/>
    </location>
</feature>
<feature type="topological domain" description="Extracellular" evidence="2">
    <location>
        <begin position="1"/>
        <end position="43"/>
    </location>
</feature>
<feature type="transmembrane region" description="Helical; Name=1" evidence="3">
    <location>
        <begin position="44"/>
        <end position="64"/>
    </location>
</feature>
<feature type="topological domain" description="Cytoplasmic" evidence="2">
    <location>
        <begin position="65"/>
        <end position="86"/>
    </location>
</feature>
<feature type="transmembrane region" description="Helical; Name=2" evidence="3">
    <location>
        <begin position="87"/>
        <end position="107"/>
    </location>
</feature>
<feature type="topological domain" description="Extracellular" evidence="2">
    <location>
        <begin position="108"/>
        <end position="212"/>
    </location>
</feature>
<feature type="transmembrane region" description="Helical; Name=3" evidence="3">
    <location>
        <begin position="213"/>
        <end position="233"/>
    </location>
</feature>
<feature type="topological domain" description="Cytoplasmic" evidence="2">
    <location>
        <begin position="234"/>
        <end position="238"/>
    </location>
</feature>
<feature type="transmembrane region" description="Helical; Name=4" evidence="3">
    <location>
        <begin position="239"/>
        <end position="259"/>
    </location>
</feature>
<feature type="topological domain" description="Extracellular" evidence="2">
    <location>
        <begin position="260"/>
        <end position="388"/>
    </location>
</feature>
<feature type="transmembrane region" description="Helical; Name=5" evidence="3">
    <location>
        <begin position="389"/>
        <end position="409"/>
    </location>
</feature>
<feature type="topological domain" description="Cytoplasmic" evidence="2">
    <location>
        <begin position="410"/>
        <end position="449"/>
    </location>
</feature>
<feature type="site" description="Essential for the formation of the channel-pore" evidence="1">
    <location>
        <position position="163"/>
    </location>
</feature>
<feature type="glycosylation site" description="N-linked (GlcNAc...) asparagine" evidence="3">
    <location>
        <position position="128"/>
    </location>
</feature>
<feature type="glycosylation site" description="N-linked (GlcNAc...) asparagine" evidence="3">
    <location>
        <position position="282"/>
    </location>
</feature>
<feature type="glycosylation site" description="N-linked (GlcNAc...) asparagine" evidence="3">
    <location>
        <position position="353"/>
    </location>
</feature>
<feature type="disulfide bond" evidence="2">
    <location>
        <begin position="273"/>
        <end position="383"/>
    </location>
</feature>
<feature type="disulfide bond" evidence="2">
    <location>
        <begin position="301"/>
        <end position="368"/>
    </location>
</feature>